<organism>
    <name type="scientific">Azorhizobium caulinodans (strain ATCC 43989 / DSM 5975 / JCM 20966 / LMG 6465 / NBRC 14845 / NCIMB 13405 / ORS 571)</name>
    <dbReference type="NCBI Taxonomy" id="438753"/>
    <lineage>
        <taxon>Bacteria</taxon>
        <taxon>Pseudomonadati</taxon>
        <taxon>Pseudomonadota</taxon>
        <taxon>Alphaproteobacteria</taxon>
        <taxon>Hyphomicrobiales</taxon>
        <taxon>Xanthobacteraceae</taxon>
        <taxon>Azorhizobium</taxon>
    </lineage>
</organism>
<sequence length="447" mass="48485">MARKYFGTDGVRGRANATLTADLALRVGMAAGLAFRRGEHRHRVVIGKDTRLSGYMIENALVAGFTSVGMDVLLLGPMPTPAVGMLTRSMRADLGVMISASHNPFDDNGIKLFGPDGFKLSDQIEHEIEELIDEDLSKKLAQPMDIGRARRVEGVHARYIEYAKRTLPRDQSFEGLRVVVDCANGAAYRVAPDALWELGAEVISMGVEPDGLNINRDVGSTSPAALSAKVREVRADVGIALDGDADRVIIVDEKGHVVDGDQIMAVVAHSFKEDGRLSRDGIVATVMSNLGLERYLKDEGLTLARTSVGDRYVLERMRSDGYNVGGEQSGHIILSDYSTTGDGLLAALQVLAVVARSERPVSEVCHRFDPLPQVLKNVRYSSGKPLEHENVQSAIADAERRLANHGRLLIRPSGTEPVIRVMGEGDDFELVEGVVDEVIEALRKVAA</sequence>
<keyword id="KW-0413">Isomerase</keyword>
<keyword id="KW-0460">Magnesium</keyword>
<keyword id="KW-0479">Metal-binding</keyword>
<keyword id="KW-0597">Phosphoprotein</keyword>
<keyword id="KW-1185">Reference proteome</keyword>
<proteinExistence type="inferred from homology"/>
<accession>A8HUR7</accession>
<feature type="chain" id="PRO_1000073569" description="Phosphoglucosamine mutase">
    <location>
        <begin position="1"/>
        <end position="447"/>
    </location>
</feature>
<feature type="active site" description="Phosphoserine intermediate" evidence="1">
    <location>
        <position position="101"/>
    </location>
</feature>
<feature type="binding site" description="via phosphate group" evidence="1">
    <location>
        <position position="101"/>
    </location>
    <ligand>
        <name>Mg(2+)</name>
        <dbReference type="ChEBI" id="CHEBI:18420"/>
    </ligand>
</feature>
<feature type="binding site" evidence="1">
    <location>
        <position position="242"/>
    </location>
    <ligand>
        <name>Mg(2+)</name>
        <dbReference type="ChEBI" id="CHEBI:18420"/>
    </ligand>
</feature>
<feature type="binding site" evidence="1">
    <location>
        <position position="244"/>
    </location>
    <ligand>
        <name>Mg(2+)</name>
        <dbReference type="ChEBI" id="CHEBI:18420"/>
    </ligand>
</feature>
<feature type="binding site" evidence="1">
    <location>
        <position position="246"/>
    </location>
    <ligand>
        <name>Mg(2+)</name>
        <dbReference type="ChEBI" id="CHEBI:18420"/>
    </ligand>
</feature>
<feature type="modified residue" description="Phosphoserine" evidence="1">
    <location>
        <position position="101"/>
    </location>
</feature>
<gene>
    <name evidence="1" type="primary">glmM</name>
    <name type="ordered locus">AZC_0975</name>
</gene>
<protein>
    <recommendedName>
        <fullName evidence="1">Phosphoglucosamine mutase</fullName>
        <ecNumber evidence="1">5.4.2.10</ecNumber>
    </recommendedName>
</protein>
<evidence type="ECO:0000255" key="1">
    <source>
        <dbReference type="HAMAP-Rule" id="MF_01554"/>
    </source>
</evidence>
<reference key="1">
    <citation type="submission" date="2007-04" db="EMBL/GenBank/DDBJ databases">
        <title>Complete genome sequence of the nitrogen-fixing bacterium Azorhizobium caulinodans ORS571.</title>
        <authorList>
            <person name="Lee K.B."/>
            <person name="Backer P.D."/>
            <person name="Aono T."/>
            <person name="Liu C.T."/>
            <person name="Suzuki S."/>
            <person name="Suzuki T."/>
            <person name="Kaneko T."/>
            <person name="Yamada M."/>
            <person name="Tabata S."/>
            <person name="Kupfer D.M."/>
            <person name="Najar F.Z."/>
            <person name="Wiley G.B."/>
            <person name="Roe B."/>
            <person name="Binnewies T."/>
            <person name="Ussery D."/>
            <person name="Vereecke D."/>
            <person name="Gevers D."/>
            <person name="Holsters M."/>
            <person name="Oyaizu H."/>
        </authorList>
    </citation>
    <scope>NUCLEOTIDE SEQUENCE [LARGE SCALE GENOMIC DNA]</scope>
    <source>
        <strain>ATCC 43989 / DSM 5975 / JCM 20966 / LMG 6465 / NBRC 14845 / NCIMB 13405 / ORS 571</strain>
    </source>
</reference>
<comment type="function">
    <text evidence="1">Catalyzes the conversion of glucosamine-6-phosphate to glucosamine-1-phosphate.</text>
</comment>
<comment type="catalytic activity">
    <reaction evidence="1">
        <text>alpha-D-glucosamine 1-phosphate = D-glucosamine 6-phosphate</text>
        <dbReference type="Rhea" id="RHEA:23424"/>
        <dbReference type="ChEBI" id="CHEBI:58516"/>
        <dbReference type="ChEBI" id="CHEBI:58725"/>
        <dbReference type="EC" id="5.4.2.10"/>
    </reaction>
</comment>
<comment type="cofactor">
    <cofactor evidence="1">
        <name>Mg(2+)</name>
        <dbReference type="ChEBI" id="CHEBI:18420"/>
    </cofactor>
    <text evidence="1">Binds 1 Mg(2+) ion per subunit.</text>
</comment>
<comment type="PTM">
    <text evidence="1">Activated by phosphorylation.</text>
</comment>
<comment type="similarity">
    <text evidence="1">Belongs to the phosphohexose mutase family.</text>
</comment>
<name>GLMM_AZOC5</name>
<dbReference type="EC" id="5.4.2.10" evidence="1"/>
<dbReference type="EMBL" id="AP009384">
    <property type="protein sequence ID" value="BAF86973.1"/>
    <property type="molecule type" value="Genomic_DNA"/>
</dbReference>
<dbReference type="RefSeq" id="WP_012169506.1">
    <property type="nucleotide sequence ID" value="NC_009937.1"/>
</dbReference>
<dbReference type="SMR" id="A8HUR7"/>
<dbReference type="STRING" id="438753.AZC_0975"/>
<dbReference type="KEGG" id="azc:AZC_0975"/>
<dbReference type="eggNOG" id="COG1109">
    <property type="taxonomic scope" value="Bacteria"/>
</dbReference>
<dbReference type="HOGENOM" id="CLU_016950_7_0_5"/>
<dbReference type="Proteomes" id="UP000000270">
    <property type="component" value="Chromosome"/>
</dbReference>
<dbReference type="GO" id="GO:0005829">
    <property type="term" value="C:cytosol"/>
    <property type="evidence" value="ECO:0007669"/>
    <property type="project" value="TreeGrafter"/>
</dbReference>
<dbReference type="GO" id="GO:0000287">
    <property type="term" value="F:magnesium ion binding"/>
    <property type="evidence" value="ECO:0007669"/>
    <property type="project" value="UniProtKB-UniRule"/>
</dbReference>
<dbReference type="GO" id="GO:0008966">
    <property type="term" value="F:phosphoglucosamine mutase activity"/>
    <property type="evidence" value="ECO:0007669"/>
    <property type="project" value="UniProtKB-UniRule"/>
</dbReference>
<dbReference type="GO" id="GO:0004615">
    <property type="term" value="F:phosphomannomutase activity"/>
    <property type="evidence" value="ECO:0007669"/>
    <property type="project" value="TreeGrafter"/>
</dbReference>
<dbReference type="GO" id="GO:0005975">
    <property type="term" value="P:carbohydrate metabolic process"/>
    <property type="evidence" value="ECO:0007669"/>
    <property type="project" value="InterPro"/>
</dbReference>
<dbReference type="GO" id="GO:0009252">
    <property type="term" value="P:peptidoglycan biosynthetic process"/>
    <property type="evidence" value="ECO:0007669"/>
    <property type="project" value="TreeGrafter"/>
</dbReference>
<dbReference type="GO" id="GO:0006048">
    <property type="term" value="P:UDP-N-acetylglucosamine biosynthetic process"/>
    <property type="evidence" value="ECO:0007669"/>
    <property type="project" value="TreeGrafter"/>
</dbReference>
<dbReference type="CDD" id="cd05802">
    <property type="entry name" value="GlmM"/>
    <property type="match status" value="1"/>
</dbReference>
<dbReference type="FunFam" id="3.30.310.50:FF:000001">
    <property type="entry name" value="Phosphoglucosamine mutase"/>
    <property type="match status" value="1"/>
</dbReference>
<dbReference type="FunFam" id="3.40.120.10:FF:000001">
    <property type="entry name" value="Phosphoglucosamine mutase"/>
    <property type="match status" value="1"/>
</dbReference>
<dbReference type="FunFam" id="3.40.120.10:FF:000002">
    <property type="entry name" value="Phosphoglucosamine mutase"/>
    <property type="match status" value="1"/>
</dbReference>
<dbReference type="Gene3D" id="3.40.120.10">
    <property type="entry name" value="Alpha-D-Glucose-1,6-Bisphosphate, subunit A, domain 3"/>
    <property type="match status" value="3"/>
</dbReference>
<dbReference type="Gene3D" id="3.30.310.50">
    <property type="entry name" value="Alpha-D-phosphohexomutase, C-terminal domain"/>
    <property type="match status" value="1"/>
</dbReference>
<dbReference type="HAMAP" id="MF_01554_B">
    <property type="entry name" value="GlmM_B"/>
    <property type="match status" value="1"/>
</dbReference>
<dbReference type="InterPro" id="IPR005844">
    <property type="entry name" value="A-D-PHexomutase_a/b/a-I"/>
</dbReference>
<dbReference type="InterPro" id="IPR016055">
    <property type="entry name" value="A-D-PHexomutase_a/b/a-I/II/III"/>
</dbReference>
<dbReference type="InterPro" id="IPR005845">
    <property type="entry name" value="A-D-PHexomutase_a/b/a-II"/>
</dbReference>
<dbReference type="InterPro" id="IPR005846">
    <property type="entry name" value="A-D-PHexomutase_a/b/a-III"/>
</dbReference>
<dbReference type="InterPro" id="IPR005843">
    <property type="entry name" value="A-D-PHexomutase_C"/>
</dbReference>
<dbReference type="InterPro" id="IPR036900">
    <property type="entry name" value="A-D-PHexomutase_C_sf"/>
</dbReference>
<dbReference type="InterPro" id="IPR016066">
    <property type="entry name" value="A-D-PHexomutase_CS"/>
</dbReference>
<dbReference type="InterPro" id="IPR005841">
    <property type="entry name" value="Alpha-D-phosphohexomutase_SF"/>
</dbReference>
<dbReference type="InterPro" id="IPR006352">
    <property type="entry name" value="GlmM_bact"/>
</dbReference>
<dbReference type="InterPro" id="IPR050060">
    <property type="entry name" value="Phosphoglucosamine_mutase"/>
</dbReference>
<dbReference type="NCBIfam" id="TIGR01455">
    <property type="entry name" value="glmM"/>
    <property type="match status" value="1"/>
</dbReference>
<dbReference type="NCBIfam" id="NF008139">
    <property type="entry name" value="PRK10887.1"/>
    <property type="match status" value="1"/>
</dbReference>
<dbReference type="PANTHER" id="PTHR42946:SF1">
    <property type="entry name" value="PHOSPHOGLUCOMUTASE (ALPHA-D-GLUCOSE-1,6-BISPHOSPHATE-DEPENDENT)"/>
    <property type="match status" value="1"/>
</dbReference>
<dbReference type="PANTHER" id="PTHR42946">
    <property type="entry name" value="PHOSPHOHEXOSE MUTASE"/>
    <property type="match status" value="1"/>
</dbReference>
<dbReference type="Pfam" id="PF02878">
    <property type="entry name" value="PGM_PMM_I"/>
    <property type="match status" value="1"/>
</dbReference>
<dbReference type="Pfam" id="PF02879">
    <property type="entry name" value="PGM_PMM_II"/>
    <property type="match status" value="1"/>
</dbReference>
<dbReference type="Pfam" id="PF02880">
    <property type="entry name" value="PGM_PMM_III"/>
    <property type="match status" value="1"/>
</dbReference>
<dbReference type="Pfam" id="PF00408">
    <property type="entry name" value="PGM_PMM_IV"/>
    <property type="match status" value="1"/>
</dbReference>
<dbReference type="PRINTS" id="PR00509">
    <property type="entry name" value="PGMPMM"/>
</dbReference>
<dbReference type="SUPFAM" id="SSF55957">
    <property type="entry name" value="Phosphoglucomutase, C-terminal domain"/>
    <property type="match status" value="1"/>
</dbReference>
<dbReference type="SUPFAM" id="SSF53738">
    <property type="entry name" value="Phosphoglucomutase, first 3 domains"/>
    <property type="match status" value="3"/>
</dbReference>
<dbReference type="PROSITE" id="PS00710">
    <property type="entry name" value="PGM_PMM"/>
    <property type="match status" value="1"/>
</dbReference>